<evidence type="ECO:0000255" key="1">
    <source>
        <dbReference type="HAMAP-Rule" id="MF_01328"/>
    </source>
</evidence>
<evidence type="ECO:0000256" key="2">
    <source>
        <dbReference type="SAM" id="MobiDB-lite"/>
    </source>
</evidence>
<evidence type="ECO:0000305" key="3"/>
<protein>
    <recommendedName>
        <fullName evidence="1">Large ribosomal subunit protein uL4</fullName>
    </recommendedName>
    <alternativeName>
        <fullName evidence="3">50S ribosomal protein L4</fullName>
    </alternativeName>
</protein>
<organism>
    <name type="scientific">Chlorobium luteolum (strain DSM 273 / BCRC 81028 / 2530)</name>
    <name type="common">Pelodictyon luteolum</name>
    <dbReference type="NCBI Taxonomy" id="319225"/>
    <lineage>
        <taxon>Bacteria</taxon>
        <taxon>Pseudomonadati</taxon>
        <taxon>Chlorobiota</taxon>
        <taxon>Chlorobiia</taxon>
        <taxon>Chlorobiales</taxon>
        <taxon>Chlorobiaceae</taxon>
        <taxon>Chlorobium/Pelodictyon group</taxon>
        <taxon>Pelodictyon</taxon>
    </lineage>
</organism>
<gene>
    <name evidence="1" type="primary">rplD</name>
    <name type="ordered locus">Plut_0181</name>
</gene>
<proteinExistence type="inferred from homology"/>
<sequence length="208" mass="22845">MELKVLNTAGAETGEVVTLRDDIFGAEVSEHAIWLDVKSILANKRQGTHKSKTRAEVRGGGRKPYRQKGTGNARQGSTRSPLMIGGGTIFGPTPHGYDQKVNRKVKQLARRSAFSAKAQEGRILIVEDFALAEIKTKPVADMLRNLGLDAKKILMLTPDYNMVIARSGRNIEALNIMTAEKASTYDILNSHTVLFQKTALKKLEETLG</sequence>
<keyword id="KW-1185">Reference proteome</keyword>
<keyword id="KW-0687">Ribonucleoprotein</keyword>
<keyword id="KW-0689">Ribosomal protein</keyword>
<keyword id="KW-0694">RNA-binding</keyword>
<keyword id="KW-0699">rRNA-binding</keyword>
<name>RL4_CHLL3</name>
<dbReference type="EMBL" id="CP000096">
    <property type="protein sequence ID" value="ABB23071.1"/>
    <property type="molecule type" value="Genomic_DNA"/>
</dbReference>
<dbReference type="RefSeq" id="WP_011356947.1">
    <property type="nucleotide sequence ID" value="NC_007512.1"/>
</dbReference>
<dbReference type="SMR" id="Q3B6G0"/>
<dbReference type="STRING" id="319225.Plut_0181"/>
<dbReference type="KEGG" id="plt:Plut_0181"/>
<dbReference type="eggNOG" id="COG0088">
    <property type="taxonomic scope" value="Bacteria"/>
</dbReference>
<dbReference type="HOGENOM" id="CLU_041575_5_2_10"/>
<dbReference type="OrthoDB" id="9803201at2"/>
<dbReference type="Proteomes" id="UP000002709">
    <property type="component" value="Chromosome"/>
</dbReference>
<dbReference type="GO" id="GO:1990904">
    <property type="term" value="C:ribonucleoprotein complex"/>
    <property type="evidence" value="ECO:0007669"/>
    <property type="project" value="UniProtKB-KW"/>
</dbReference>
<dbReference type="GO" id="GO:0005840">
    <property type="term" value="C:ribosome"/>
    <property type="evidence" value="ECO:0007669"/>
    <property type="project" value="UniProtKB-KW"/>
</dbReference>
<dbReference type="GO" id="GO:0019843">
    <property type="term" value="F:rRNA binding"/>
    <property type="evidence" value="ECO:0007669"/>
    <property type="project" value="UniProtKB-UniRule"/>
</dbReference>
<dbReference type="GO" id="GO:0003735">
    <property type="term" value="F:structural constituent of ribosome"/>
    <property type="evidence" value="ECO:0007669"/>
    <property type="project" value="InterPro"/>
</dbReference>
<dbReference type="GO" id="GO:0006412">
    <property type="term" value="P:translation"/>
    <property type="evidence" value="ECO:0007669"/>
    <property type="project" value="UniProtKB-UniRule"/>
</dbReference>
<dbReference type="Gene3D" id="3.40.1370.10">
    <property type="match status" value="1"/>
</dbReference>
<dbReference type="HAMAP" id="MF_01328_B">
    <property type="entry name" value="Ribosomal_uL4_B"/>
    <property type="match status" value="1"/>
</dbReference>
<dbReference type="InterPro" id="IPR002136">
    <property type="entry name" value="Ribosomal_uL4"/>
</dbReference>
<dbReference type="InterPro" id="IPR013005">
    <property type="entry name" value="Ribosomal_uL4-like"/>
</dbReference>
<dbReference type="InterPro" id="IPR023574">
    <property type="entry name" value="Ribosomal_uL4_dom_sf"/>
</dbReference>
<dbReference type="NCBIfam" id="TIGR03953">
    <property type="entry name" value="rplD_bact"/>
    <property type="match status" value="1"/>
</dbReference>
<dbReference type="PANTHER" id="PTHR10746">
    <property type="entry name" value="50S RIBOSOMAL PROTEIN L4"/>
    <property type="match status" value="1"/>
</dbReference>
<dbReference type="PANTHER" id="PTHR10746:SF6">
    <property type="entry name" value="LARGE RIBOSOMAL SUBUNIT PROTEIN UL4M"/>
    <property type="match status" value="1"/>
</dbReference>
<dbReference type="Pfam" id="PF00573">
    <property type="entry name" value="Ribosomal_L4"/>
    <property type="match status" value="1"/>
</dbReference>
<dbReference type="SUPFAM" id="SSF52166">
    <property type="entry name" value="Ribosomal protein L4"/>
    <property type="match status" value="1"/>
</dbReference>
<comment type="function">
    <text evidence="1">One of the primary rRNA binding proteins, this protein initially binds near the 5'-end of the 23S rRNA. It is important during the early stages of 50S assembly. It makes multiple contacts with different domains of the 23S rRNA in the assembled 50S subunit and ribosome.</text>
</comment>
<comment type="function">
    <text evidence="1">Forms part of the polypeptide exit tunnel.</text>
</comment>
<comment type="subunit">
    <text evidence="1">Part of the 50S ribosomal subunit.</text>
</comment>
<comment type="similarity">
    <text evidence="1">Belongs to the universal ribosomal protein uL4 family.</text>
</comment>
<reference key="1">
    <citation type="submission" date="2005-08" db="EMBL/GenBank/DDBJ databases">
        <title>Complete sequence of Pelodictyon luteolum DSM 273.</title>
        <authorList>
            <consortium name="US DOE Joint Genome Institute"/>
            <person name="Copeland A."/>
            <person name="Lucas S."/>
            <person name="Lapidus A."/>
            <person name="Barry K."/>
            <person name="Detter J.C."/>
            <person name="Glavina T."/>
            <person name="Hammon N."/>
            <person name="Israni S."/>
            <person name="Pitluck S."/>
            <person name="Bryant D."/>
            <person name="Schmutz J."/>
            <person name="Larimer F."/>
            <person name="Land M."/>
            <person name="Kyrpides N."/>
            <person name="Ivanova N."/>
            <person name="Richardson P."/>
        </authorList>
    </citation>
    <scope>NUCLEOTIDE SEQUENCE [LARGE SCALE GENOMIC DNA]</scope>
    <source>
        <strain>DSM 273 / BCRC 81028 / 2530</strain>
    </source>
</reference>
<feature type="chain" id="PRO_0000242410" description="Large ribosomal subunit protein uL4">
    <location>
        <begin position="1"/>
        <end position="208"/>
    </location>
</feature>
<feature type="region of interest" description="Disordered" evidence="2">
    <location>
        <begin position="45"/>
        <end position="83"/>
    </location>
</feature>
<feature type="compositionally biased region" description="Polar residues" evidence="2">
    <location>
        <begin position="69"/>
        <end position="80"/>
    </location>
</feature>
<accession>Q3B6G0</accession>